<keyword id="KW-0479">Metal-binding</keyword>
<keyword id="KW-0480">Metal-thiolate cluster</keyword>
<protein>
    <recommendedName>
        <fullName>Metallothionein-like protein type 2, MT2-18</fullName>
    </recommendedName>
</protein>
<reference key="1">
    <citation type="journal article" date="1998" name="Plant Mol. Biol.">
        <title>cDNA cloning and expression analysis of genes encoding GSH synthesis in roots of the heavy-metal accumulator Brassica juncea L.: evidence for Cd-induction of a putative mitochondrial gamma-glutamylcysteine synthetase isoform.</title>
        <authorList>
            <person name="Schaefer H.J."/>
            <person name="Haag-Kerwer A."/>
            <person name="Rausch T.H."/>
        </authorList>
    </citation>
    <scope>NUCLEOTIDE SEQUENCE [MRNA]</scope>
    <source>
        <strain>cv. Vittasso</strain>
        <tissue>Root</tissue>
    </source>
</reference>
<sequence>MSCCGGNCGCGSGCKCGNGCGGCKMYPDLGFSGESTTTETFVFGVAPAMKNQYEASGEGVAENDACKCGSDCKCDPCTCK</sequence>
<comment type="function">
    <text>Metallothioneins have a high content of cysteine residues that bind various heavy metals.</text>
</comment>
<comment type="similarity">
    <text evidence="1">Belongs to the metallothionein superfamily. Type 15 family.</text>
</comment>
<dbReference type="EMBL" id="Y10850">
    <property type="protein sequence ID" value="CAA71803.1"/>
    <property type="molecule type" value="mRNA"/>
</dbReference>
<dbReference type="GO" id="GO:0046872">
    <property type="term" value="F:metal ion binding"/>
    <property type="evidence" value="ECO:0007669"/>
    <property type="project" value="UniProtKB-KW"/>
</dbReference>
<dbReference type="InterPro" id="IPR000347">
    <property type="entry name" value="Metalthion_15p"/>
</dbReference>
<dbReference type="PANTHER" id="PTHR33543">
    <property type="entry name" value="METALLOTHIONEIN-LIKE PROTEIN 2A"/>
    <property type="match status" value="1"/>
</dbReference>
<dbReference type="PANTHER" id="PTHR33543:SF36">
    <property type="entry name" value="METALLOTHIONEIN-LIKE PROTEIN 2A"/>
    <property type="match status" value="1"/>
</dbReference>
<dbReference type="Pfam" id="PF01439">
    <property type="entry name" value="Metallothio_2"/>
    <property type="match status" value="1"/>
</dbReference>
<evidence type="ECO:0000305" key="1"/>
<name>MT22_BRAJU</name>
<proteinExistence type="inferred from homology"/>
<organism>
    <name type="scientific">Brassica juncea</name>
    <name type="common">Indian mustard</name>
    <name type="synonym">Sinapis juncea</name>
    <dbReference type="NCBI Taxonomy" id="3707"/>
    <lineage>
        <taxon>Eukaryota</taxon>
        <taxon>Viridiplantae</taxon>
        <taxon>Streptophyta</taxon>
        <taxon>Embryophyta</taxon>
        <taxon>Tracheophyta</taxon>
        <taxon>Spermatophyta</taxon>
        <taxon>Magnoliopsida</taxon>
        <taxon>eudicotyledons</taxon>
        <taxon>Gunneridae</taxon>
        <taxon>Pentapetalae</taxon>
        <taxon>rosids</taxon>
        <taxon>malvids</taxon>
        <taxon>Brassicales</taxon>
        <taxon>Brassicaceae</taxon>
        <taxon>Brassiceae</taxon>
        <taxon>Brassica</taxon>
    </lineage>
</organism>
<accession>P69163</accession>
<accession>Q39410</accession>
<accession>Q42494</accession>
<feature type="chain" id="PRO_0000197389" description="Metallothionein-like protein type 2, MT2-18">
    <location>
        <begin position="1"/>
        <end position="80"/>
    </location>
</feature>